<proteinExistence type="inferred from homology"/>
<organism>
    <name type="scientific">Streptococcus mutans serotype c (strain ATCC 700610 / UA159)</name>
    <dbReference type="NCBI Taxonomy" id="210007"/>
    <lineage>
        <taxon>Bacteria</taxon>
        <taxon>Bacillati</taxon>
        <taxon>Bacillota</taxon>
        <taxon>Bacilli</taxon>
        <taxon>Lactobacillales</taxon>
        <taxon>Streptococcaceae</taxon>
        <taxon>Streptococcus</taxon>
    </lineage>
</organism>
<dbReference type="EC" id="6.1.1.19" evidence="1"/>
<dbReference type="EMBL" id="AE014133">
    <property type="protein sequence ID" value="AAN59692.1"/>
    <property type="molecule type" value="Genomic_DNA"/>
</dbReference>
<dbReference type="RefSeq" id="NP_722386.1">
    <property type="nucleotide sequence ID" value="NC_004350.2"/>
</dbReference>
<dbReference type="RefSeq" id="WP_002262405.1">
    <property type="nucleotide sequence ID" value="NC_004350.2"/>
</dbReference>
<dbReference type="SMR" id="Q8DRW2"/>
<dbReference type="STRING" id="210007.SMU_2098"/>
<dbReference type="KEGG" id="smu:SMU_2098"/>
<dbReference type="PATRIC" id="fig|210007.7.peg.1868"/>
<dbReference type="eggNOG" id="COG0018">
    <property type="taxonomic scope" value="Bacteria"/>
</dbReference>
<dbReference type="HOGENOM" id="CLU_006406_6_2_9"/>
<dbReference type="OrthoDB" id="9805987at2"/>
<dbReference type="PhylomeDB" id="Q8DRW2"/>
<dbReference type="Proteomes" id="UP000002512">
    <property type="component" value="Chromosome"/>
</dbReference>
<dbReference type="GO" id="GO:0005737">
    <property type="term" value="C:cytoplasm"/>
    <property type="evidence" value="ECO:0007669"/>
    <property type="project" value="UniProtKB-SubCell"/>
</dbReference>
<dbReference type="GO" id="GO:0004814">
    <property type="term" value="F:arginine-tRNA ligase activity"/>
    <property type="evidence" value="ECO:0007669"/>
    <property type="project" value="UniProtKB-UniRule"/>
</dbReference>
<dbReference type="GO" id="GO:0005524">
    <property type="term" value="F:ATP binding"/>
    <property type="evidence" value="ECO:0007669"/>
    <property type="project" value="UniProtKB-UniRule"/>
</dbReference>
<dbReference type="GO" id="GO:0006420">
    <property type="term" value="P:arginyl-tRNA aminoacylation"/>
    <property type="evidence" value="ECO:0007669"/>
    <property type="project" value="UniProtKB-UniRule"/>
</dbReference>
<dbReference type="CDD" id="cd07956">
    <property type="entry name" value="Anticodon_Ia_Arg"/>
    <property type="match status" value="1"/>
</dbReference>
<dbReference type="CDD" id="cd00671">
    <property type="entry name" value="ArgRS_core"/>
    <property type="match status" value="1"/>
</dbReference>
<dbReference type="FunFam" id="3.40.50.620:FF:000116">
    <property type="entry name" value="Arginine--tRNA ligase"/>
    <property type="match status" value="1"/>
</dbReference>
<dbReference type="FunFam" id="1.10.730.10:FF:000006">
    <property type="entry name" value="Arginyl-tRNA synthetase 2, mitochondrial"/>
    <property type="match status" value="1"/>
</dbReference>
<dbReference type="Gene3D" id="3.30.1360.70">
    <property type="entry name" value="Arginyl tRNA synthetase N-terminal domain"/>
    <property type="match status" value="1"/>
</dbReference>
<dbReference type="Gene3D" id="3.40.50.620">
    <property type="entry name" value="HUPs"/>
    <property type="match status" value="1"/>
</dbReference>
<dbReference type="Gene3D" id="1.10.730.10">
    <property type="entry name" value="Isoleucyl-tRNA Synthetase, Domain 1"/>
    <property type="match status" value="1"/>
</dbReference>
<dbReference type="HAMAP" id="MF_00123">
    <property type="entry name" value="Arg_tRNA_synth"/>
    <property type="match status" value="1"/>
</dbReference>
<dbReference type="InterPro" id="IPR001278">
    <property type="entry name" value="Arg-tRNA-ligase"/>
</dbReference>
<dbReference type="InterPro" id="IPR005148">
    <property type="entry name" value="Arg-tRNA-synth_N"/>
</dbReference>
<dbReference type="InterPro" id="IPR036695">
    <property type="entry name" value="Arg-tRNA-synth_N_sf"/>
</dbReference>
<dbReference type="InterPro" id="IPR035684">
    <property type="entry name" value="ArgRS_core"/>
</dbReference>
<dbReference type="InterPro" id="IPR008909">
    <property type="entry name" value="DALR_anticod-bd"/>
</dbReference>
<dbReference type="InterPro" id="IPR014729">
    <property type="entry name" value="Rossmann-like_a/b/a_fold"/>
</dbReference>
<dbReference type="InterPro" id="IPR009080">
    <property type="entry name" value="tRNAsynth_Ia_anticodon-bd"/>
</dbReference>
<dbReference type="NCBIfam" id="TIGR00456">
    <property type="entry name" value="argS"/>
    <property type="match status" value="1"/>
</dbReference>
<dbReference type="PANTHER" id="PTHR11956:SF5">
    <property type="entry name" value="ARGININE--TRNA LIGASE, CYTOPLASMIC"/>
    <property type="match status" value="1"/>
</dbReference>
<dbReference type="PANTHER" id="PTHR11956">
    <property type="entry name" value="ARGINYL-TRNA SYNTHETASE"/>
    <property type="match status" value="1"/>
</dbReference>
<dbReference type="Pfam" id="PF03485">
    <property type="entry name" value="Arg_tRNA_synt_N"/>
    <property type="match status" value="1"/>
</dbReference>
<dbReference type="Pfam" id="PF05746">
    <property type="entry name" value="DALR_1"/>
    <property type="match status" value="1"/>
</dbReference>
<dbReference type="Pfam" id="PF00750">
    <property type="entry name" value="tRNA-synt_1d"/>
    <property type="match status" value="1"/>
</dbReference>
<dbReference type="PRINTS" id="PR01038">
    <property type="entry name" value="TRNASYNTHARG"/>
</dbReference>
<dbReference type="SMART" id="SM01016">
    <property type="entry name" value="Arg_tRNA_synt_N"/>
    <property type="match status" value="1"/>
</dbReference>
<dbReference type="SMART" id="SM00836">
    <property type="entry name" value="DALR_1"/>
    <property type="match status" value="1"/>
</dbReference>
<dbReference type="SUPFAM" id="SSF47323">
    <property type="entry name" value="Anticodon-binding domain of a subclass of class I aminoacyl-tRNA synthetases"/>
    <property type="match status" value="1"/>
</dbReference>
<dbReference type="SUPFAM" id="SSF55190">
    <property type="entry name" value="Arginyl-tRNA synthetase (ArgRS), N-terminal 'additional' domain"/>
    <property type="match status" value="1"/>
</dbReference>
<dbReference type="SUPFAM" id="SSF52374">
    <property type="entry name" value="Nucleotidylyl transferase"/>
    <property type="match status" value="1"/>
</dbReference>
<evidence type="ECO:0000255" key="1">
    <source>
        <dbReference type="HAMAP-Rule" id="MF_00123"/>
    </source>
</evidence>
<feature type="chain" id="PRO_0000151617" description="Arginine--tRNA ligase">
    <location>
        <begin position="1"/>
        <end position="563"/>
    </location>
</feature>
<feature type="short sequence motif" description="'HIGH' region">
    <location>
        <begin position="121"/>
        <end position="131"/>
    </location>
</feature>
<comment type="catalytic activity">
    <reaction evidence="1">
        <text>tRNA(Arg) + L-arginine + ATP = L-arginyl-tRNA(Arg) + AMP + diphosphate</text>
        <dbReference type="Rhea" id="RHEA:20301"/>
        <dbReference type="Rhea" id="RHEA-COMP:9658"/>
        <dbReference type="Rhea" id="RHEA-COMP:9673"/>
        <dbReference type="ChEBI" id="CHEBI:30616"/>
        <dbReference type="ChEBI" id="CHEBI:32682"/>
        <dbReference type="ChEBI" id="CHEBI:33019"/>
        <dbReference type="ChEBI" id="CHEBI:78442"/>
        <dbReference type="ChEBI" id="CHEBI:78513"/>
        <dbReference type="ChEBI" id="CHEBI:456215"/>
        <dbReference type="EC" id="6.1.1.19"/>
    </reaction>
</comment>
<comment type="subunit">
    <text evidence="1">Monomer.</text>
</comment>
<comment type="subcellular location">
    <subcellularLocation>
        <location evidence="1">Cytoplasm</location>
    </subcellularLocation>
</comment>
<comment type="similarity">
    <text evidence="1">Belongs to the class-I aminoacyl-tRNA synthetase family.</text>
</comment>
<gene>
    <name evidence="1" type="primary">argS</name>
    <name type="ordered locus">SMU_2098</name>
</gene>
<protein>
    <recommendedName>
        <fullName evidence="1">Arginine--tRNA ligase</fullName>
        <ecNumber evidence="1">6.1.1.19</ecNumber>
    </recommendedName>
    <alternativeName>
        <fullName evidence="1">Arginyl-tRNA synthetase</fullName>
        <shortName evidence="1">ArgRS</shortName>
    </alternativeName>
</protein>
<name>SYR_STRMU</name>
<reference key="1">
    <citation type="journal article" date="2002" name="Proc. Natl. Acad. Sci. U.S.A.">
        <title>Genome sequence of Streptococcus mutans UA159, a cariogenic dental pathogen.</title>
        <authorList>
            <person name="Ajdic D.J."/>
            <person name="McShan W.M."/>
            <person name="McLaughlin R.E."/>
            <person name="Savic G."/>
            <person name="Chang J."/>
            <person name="Carson M.B."/>
            <person name="Primeaux C."/>
            <person name="Tian R."/>
            <person name="Kenton S."/>
            <person name="Jia H.G."/>
            <person name="Lin S.P."/>
            <person name="Qian Y."/>
            <person name="Li S."/>
            <person name="Zhu H."/>
            <person name="Najar F.Z."/>
            <person name="Lai H."/>
            <person name="White J."/>
            <person name="Roe B.A."/>
            <person name="Ferretti J.J."/>
        </authorList>
    </citation>
    <scope>NUCLEOTIDE SEQUENCE [LARGE SCALE GENOMIC DNA]</scope>
    <source>
        <strain>ATCC 700610 / UA159</strain>
    </source>
</reference>
<accession>Q8DRW2</accession>
<sequence length="563" mass="63573">MNHNRLIAKEIAAIVPALEQETILNLLEKPKKSSMGDLAFPTFSLAKTMRKAPQIIASELVGQINNSYFEKVEAVGPYINFFLNKSEISAQVLKEVIKKREDYAQAAIGQGHNIVIDLSSPNIAKPFSIGHLRSTVIGDALSNIFQKLGYETVKINHLGDWGKQFGMLIVAYKKWGSEEAVRAHPIDELLKIYVRINAETKNHPELDEEAREWFRKLENNDEEALALWQWFRDESLMEFNRLYAELGIDFDSYNGEAFYNDKMEEVVQLLAEKGLLEESKGAQVVNLEKYGIEHPALIKKSDGATLYITRDLAAAIYRKRTYDFAKAIYVVGQEQTAHFKQLKAVLAEMGYAWSKDIQHVSFGLVTKNGQKLSTRKGNVILLEPTIAEAVKRSLAQIDTKNPDLVNKEAVAHAVGVGAIKFYDLKTDRTNGYDFDLEAMVSFEGETGPYVQYAHARIQSILRKADFQPQATENYQLNDTESWEIIKLIQDFPNTIVRAADNFEPSLIARFAIHLAQSFNKYYAHTRILDNSPERDSRLALSYATATVLKEALALLGVEAPNEM</sequence>
<keyword id="KW-0030">Aminoacyl-tRNA synthetase</keyword>
<keyword id="KW-0067">ATP-binding</keyword>
<keyword id="KW-0963">Cytoplasm</keyword>
<keyword id="KW-0436">Ligase</keyword>
<keyword id="KW-0547">Nucleotide-binding</keyword>
<keyword id="KW-0648">Protein biosynthesis</keyword>
<keyword id="KW-1185">Reference proteome</keyword>